<proteinExistence type="inferred from homology"/>
<name>DGOD_ECO45</name>
<keyword id="KW-0456">Lyase</keyword>
<keyword id="KW-0460">Magnesium</keyword>
<keyword id="KW-0479">Metal-binding</keyword>
<keyword id="KW-1185">Reference proteome</keyword>
<comment type="function">
    <text evidence="2">Catalyzes the dehydration of D-galactonate to 2-keto-3-deoxy-D-galactonate.</text>
</comment>
<comment type="catalytic activity">
    <reaction evidence="2">
        <text>D-galactonate = 2-dehydro-3-deoxy-D-galactonate + H2O</text>
        <dbReference type="Rhea" id="RHEA:18649"/>
        <dbReference type="ChEBI" id="CHEBI:12931"/>
        <dbReference type="ChEBI" id="CHEBI:15377"/>
        <dbReference type="ChEBI" id="CHEBI:57989"/>
        <dbReference type="EC" id="4.2.1.6"/>
    </reaction>
</comment>
<comment type="cofactor">
    <cofactor evidence="2">
        <name>Mg(2+)</name>
        <dbReference type="ChEBI" id="CHEBI:18420"/>
    </cofactor>
    <text evidence="2">Binds 1 Mg(2+) ion per subunit.</text>
</comment>
<comment type="pathway">
    <text evidence="2">Carbohydrate acid metabolism; D-galactonate degradation; D-glyceraldehyde 3-phosphate and pyruvate from D-galactonate: step 1/3.</text>
</comment>
<comment type="miscellaneous">
    <text evidence="2">Reaction proceeds via an anti dehydration.</text>
</comment>
<comment type="similarity">
    <text evidence="2">Belongs to the mandelate racemase/muconate lactonizing enzyme family. GalD subfamily.</text>
</comment>
<accession>B7MGB3</accession>
<sequence length="382" mass="42553">MKITKITTYRLPPRWMFLKIETDEGVVGWGEPVIEGRARTVEAAVHELSDYLIGQDPSRINDLWQVMYRAGFYRGGPILMSAIAGIDQALWDIKGKVLNAPVWQLMGGLVRDKIKAYSWVGGDRPADVIDGIKTLREIGFDTFKLNGCEELGLIDNSRAVDAAVNTVAQIREAFGNQIEFGLDFHGRVSAPMAKVLIKELEPYRPLFIEEPVLAEQAEYYPKLAAQTHIPLAAGERMFSRFDFKRVLEAGGISILQPDLSHAGGITECYKIAGMAEAYDVTLAPHCPLGPIALAACLHIDFVSYNAVLQEQSMGIHYNKGAELLDFVKNKEDFSMVGGFFKPLTKPGLGVEIDEAKVIEFSKNAPDWRNPLWRHEDNSVAEW</sequence>
<feature type="chain" id="PRO_1000140378" description="D-galactonate dehydratase">
    <location>
        <begin position="1"/>
        <end position="382"/>
    </location>
</feature>
<feature type="active site" description="Proton donor" evidence="1">
    <location>
        <position position="185"/>
    </location>
</feature>
<feature type="active site" description="Proton acceptor" evidence="1">
    <location>
        <position position="285"/>
    </location>
</feature>
<feature type="binding site" evidence="2">
    <location>
        <position position="183"/>
    </location>
    <ligand>
        <name>Mg(2+)</name>
        <dbReference type="ChEBI" id="CHEBI:18420"/>
    </ligand>
</feature>
<feature type="binding site" evidence="2">
    <location>
        <position position="209"/>
    </location>
    <ligand>
        <name>Mg(2+)</name>
        <dbReference type="ChEBI" id="CHEBI:18420"/>
    </ligand>
</feature>
<feature type="binding site" evidence="2">
    <location>
        <position position="235"/>
    </location>
    <ligand>
        <name>Mg(2+)</name>
        <dbReference type="ChEBI" id="CHEBI:18420"/>
    </ligand>
</feature>
<feature type="site" description="Increases basicity of active site His" evidence="2">
    <location>
        <position position="258"/>
    </location>
</feature>
<feature type="site" description="Transition state stabilizer" evidence="2">
    <location>
        <position position="310"/>
    </location>
</feature>
<evidence type="ECO:0000250" key="1"/>
<evidence type="ECO:0000255" key="2">
    <source>
        <dbReference type="HAMAP-Rule" id="MF_01289"/>
    </source>
</evidence>
<organism>
    <name type="scientific">Escherichia coli O45:K1 (strain S88 / ExPEC)</name>
    <dbReference type="NCBI Taxonomy" id="585035"/>
    <lineage>
        <taxon>Bacteria</taxon>
        <taxon>Pseudomonadati</taxon>
        <taxon>Pseudomonadota</taxon>
        <taxon>Gammaproteobacteria</taxon>
        <taxon>Enterobacterales</taxon>
        <taxon>Enterobacteriaceae</taxon>
        <taxon>Escherichia</taxon>
    </lineage>
</organism>
<protein>
    <recommendedName>
        <fullName evidence="2">D-galactonate dehydratase</fullName>
        <shortName evidence="2">GalD</shortName>
        <ecNumber evidence="2">4.2.1.6</ecNumber>
    </recommendedName>
</protein>
<reference key="1">
    <citation type="journal article" date="2009" name="PLoS Genet.">
        <title>Organised genome dynamics in the Escherichia coli species results in highly diverse adaptive paths.</title>
        <authorList>
            <person name="Touchon M."/>
            <person name="Hoede C."/>
            <person name="Tenaillon O."/>
            <person name="Barbe V."/>
            <person name="Baeriswyl S."/>
            <person name="Bidet P."/>
            <person name="Bingen E."/>
            <person name="Bonacorsi S."/>
            <person name="Bouchier C."/>
            <person name="Bouvet O."/>
            <person name="Calteau A."/>
            <person name="Chiapello H."/>
            <person name="Clermont O."/>
            <person name="Cruveiller S."/>
            <person name="Danchin A."/>
            <person name="Diard M."/>
            <person name="Dossat C."/>
            <person name="Karoui M.E."/>
            <person name="Frapy E."/>
            <person name="Garry L."/>
            <person name="Ghigo J.M."/>
            <person name="Gilles A.M."/>
            <person name="Johnson J."/>
            <person name="Le Bouguenec C."/>
            <person name="Lescat M."/>
            <person name="Mangenot S."/>
            <person name="Martinez-Jehanne V."/>
            <person name="Matic I."/>
            <person name="Nassif X."/>
            <person name="Oztas S."/>
            <person name="Petit M.A."/>
            <person name="Pichon C."/>
            <person name="Rouy Z."/>
            <person name="Ruf C.S."/>
            <person name="Schneider D."/>
            <person name="Tourret J."/>
            <person name="Vacherie B."/>
            <person name="Vallenet D."/>
            <person name="Medigue C."/>
            <person name="Rocha E.P.C."/>
            <person name="Denamur E."/>
        </authorList>
    </citation>
    <scope>NUCLEOTIDE SEQUENCE [LARGE SCALE GENOMIC DNA]</scope>
    <source>
        <strain>S88 / ExPEC</strain>
    </source>
</reference>
<gene>
    <name evidence="2" type="primary">dgoD</name>
    <name type="ordered locus">ECS88_4115</name>
</gene>
<dbReference type="EC" id="4.2.1.6" evidence="2"/>
<dbReference type="EMBL" id="CU928161">
    <property type="protein sequence ID" value="CAR05321.1"/>
    <property type="molecule type" value="Genomic_DNA"/>
</dbReference>
<dbReference type="RefSeq" id="WP_000705012.1">
    <property type="nucleotide sequence ID" value="NC_011742.1"/>
</dbReference>
<dbReference type="SMR" id="B7MGB3"/>
<dbReference type="GeneID" id="89518589"/>
<dbReference type="KEGG" id="ecz:ECS88_4115"/>
<dbReference type="HOGENOM" id="CLU_030273_3_2_6"/>
<dbReference type="UniPathway" id="UPA00081">
    <property type="reaction ID" value="UER00518"/>
</dbReference>
<dbReference type="Proteomes" id="UP000000747">
    <property type="component" value="Chromosome"/>
</dbReference>
<dbReference type="GO" id="GO:0008869">
    <property type="term" value="F:galactonate dehydratase activity"/>
    <property type="evidence" value="ECO:0007669"/>
    <property type="project" value="UniProtKB-UniRule"/>
</dbReference>
<dbReference type="GO" id="GO:0000287">
    <property type="term" value="F:magnesium ion binding"/>
    <property type="evidence" value="ECO:0007669"/>
    <property type="project" value="UniProtKB-UniRule"/>
</dbReference>
<dbReference type="GO" id="GO:0009063">
    <property type="term" value="P:amino acid catabolic process"/>
    <property type="evidence" value="ECO:0007669"/>
    <property type="project" value="InterPro"/>
</dbReference>
<dbReference type="GO" id="GO:0034194">
    <property type="term" value="P:D-galactonate catabolic process"/>
    <property type="evidence" value="ECO:0007669"/>
    <property type="project" value="UniProtKB-UniRule"/>
</dbReference>
<dbReference type="CDD" id="cd03325">
    <property type="entry name" value="D-galactonate_dehydratase"/>
    <property type="match status" value="1"/>
</dbReference>
<dbReference type="FunFam" id="3.20.20.120:FF:000008">
    <property type="entry name" value="D-galactonate dehydratase"/>
    <property type="match status" value="1"/>
</dbReference>
<dbReference type="FunFam" id="3.30.390.10:FF:000003">
    <property type="entry name" value="D-galactonate dehydratase"/>
    <property type="match status" value="1"/>
</dbReference>
<dbReference type="Gene3D" id="3.20.20.120">
    <property type="entry name" value="Enolase-like C-terminal domain"/>
    <property type="match status" value="1"/>
</dbReference>
<dbReference type="Gene3D" id="3.30.390.10">
    <property type="entry name" value="Enolase-like, N-terminal domain"/>
    <property type="match status" value="1"/>
</dbReference>
<dbReference type="HAMAP" id="MF_01289">
    <property type="entry name" value="Galacton_dehydrat"/>
    <property type="match status" value="1"/>
</dbReference>
<dbReference type="InterPro" id="IPR034593">
    <property type="entry name" value="DgoD-like"/>
</dbReference>
<dbReference type="InterPro" id="IPR036849">
    <property type="entry name" value="Enolase-like_C_sf"/>
</dbReference>
<dbReference type="InterPro" id="IPR029017">
    <property type="entry name" value="Enolase-like_N"/>
</dbReference>
<dbReference type="InterPro" id="IPR029065">
    <property type="entry name" value="Enolase_C-like"/>
</dbReference>
<dbReference type="InterPro" id="IPR023592">
    <property type="entry name" value="Galactonate_deHydtase"/>
</dbReference>
<dbReference type="InterPro" id="IPR018110">
    <property type="entry name" value="Mandel_Rmase/mucon_lact_enz_CS"/>
</dbReference>
<dbReference type="InterPro" id="IPR013342">
    <property type="entry name" value="Mandelate_racemase_C"/>
</dbReference>
<dbReference type="InterPro" id="IPR013341">
    <property type="entry name" value="Mandelate_racemase_N_dom"/>
</dbReference>
<dbReference type="NCBIfam" id="NF010624">
    <property type="entry name" value="PRK14017.1"/>
    <property type="match status" value="1"/>
</dbReference>
<dbReference type="PANTHER" id="PTHR48080:SF2">
    <property type="entry name" value="D-GALACTONATE DEHYDRATASE"/>
    <property type="match status" value="1"/>
</dbReference>
<dbReference type="PANTHER" id="PTHR48080">
    <property type="entry name" value="D-GALACTONATE DEHYDRATASE-RELATED"/>
    <property type="match status" value="1"/>
</dbReference>
<dbReference type="Pfam" id="PF13378">
    <property type="entry name" value="MR_MLE_C"/>
    <property type="match status" value="1"/>
</dbReference>
<dbReference type="Pfam" id="PF02746">
    <property type="entry name" value="MR_MLE_N"/>
    <property type="match status" value="1"/>
</dbReference>
<dbReference type="SFLD" id="SFLDF00003">
    <property type="entry name" value="D-galactonate_dehydratase"/>
    <property type="match status" value="1"/>
</dbReference>
<dbReference type="SFLD" id="SFLDG00179">
    <property type="entry name" value="mandelate_racemase"/>
    <property type="match status" value="1"/>
</dbReference>
<dbReference type="SMART" id="SM00922">
    <property type="entry name" value="MR_MLE"/>
    <property type="match status" value="1"/>
</dbReference>
<dbReference type="SUPFAM" id="SSF51604">
    <property type="entry name" value="Enolase C-terminal domain-like"/>
    <property type="match status" value="1"/>
</dbReference>
<dbReference type="SUPFAM" id="SSF54826">
    <property type="entry name" value="Enolase N-terminal domain-like"/>
    <property type="match status" value="1"/>
</dbReference>
<dbReference type="PROSITE" id="PS00908">
    <property type="entry name" value="MR_MLE_1"/>
    <property type="match status" value="1"/>
</dbReference>
<dbReference type="PROSITE" id="PS00909">
    <property type="entry name" value="MR_MLE_2"/>
    <property type="match status" value="1"/>
</dbReference>